<comment type="function">
    <text evidence="1">Binds to actin and affects the structure of the cytoskeleton. At high concentrations, profilin prevents the polymerization of actin, whereas it enhances it at low concentrations (By similarity).</text>
</comment>
<comment type="subunit">
    <text evidence="1">Occurs in many kinds of cells as a complex with monomeric actin in a 1:1 ratio.</text>
</comment>
<comment type="subcellular location">
    <subcellularLocation>
        <location evidence="1">Cytoplasm</location>
        <location evidence="1">Cytoskeleton</location>
    </subcellularLocation>
</comment>
<comment type="PTM">
    <text evidence="1">Phosphorylated by MAP kinases.</text>
</comment>
<comment type="polymorphism">
    <text>Several isoforms of the allergen exist due to polymorphism.</text>
</comment>
<comment type="allergen">
    <text>Causes an allergic reaction in human.</text>
</comment>
<comment type="miscellaneous">
    <text evidence="3">The variability of the residues taking part of IgE-binding epitopes might be responsible of the difference in cross-reactivity among olive pollen cultivars, and between distantly related pollen species, leading to a variable range of allergy reactions among atopic patients.</text>
</comment>
<comment type="similarity">
    <text evidence="2">Belongs to the profilin family.</text>
</comment>
<reference key="1">
    <citation type="journal article" date="2012" name="PLoS ONE">
        <title>Characterization of profilin polymorphism in pollen with a focus on multifunctionality.</title>
        <authorList>
            <person name="Jimenez-Lopez J.C."/>
            <person name="Morales S."/>
            <person name="Castro A.J."/>
            <person name="Volkmann D."/>
            <person name="Rodriguez-Garcia M.I."/>
            <person name="Alche Jde D."/>
        </authorList>
    </citation>
    <scope>NUCLEOTIDE SEQUENCE [MRNA]</scope>
    <scope>POLYMORPHISM</scope>
    <source>
        <strain>cv. Morrut</strain>
        <tissue>Pollen</tissue>
    </source>
</reference>
<reference key="2">
    <citation type="journal article" date="2013" name="PLoS ONE">
        <title>Analysis of the effects of polymorphism on pollen profilin structural functionality and the generation of conformational, T- and B-cell epitopes.</title>
        <authorList>
            <person name="Jimenez-Lopez J.C."/>
            <person name="Rodriguez-Garcia M.I."/>
            <person name="Alche J.D."/>
        </authorList>
    </citation>
    <scope>3D-STRUCTURE MODELING</scope>
    <scope>DISULFIDE BOND</scope>
</reference>
<protein>
    <recommendedName>
        <fullName>Profilin-3</fullName>
    </recommendedName>
    <alternativeName>
        <fullName>Pollen allergen Ole e 2</fullName>
    </alternativeName>
    <allergenName>Ole e 2</allergenName>
</protein>
<evidence type="ECO:0000250" key="1"/>
<evidence type="ECO:0000305" key="2"/>
<evidence type="ECO:0000305" key="3">
    <source>
    </source>
</evidence>
<dbReference type="EMBL" id="DQ317574">
    <property type="protein sequence ID" value="ABC47417.1"/>
    <property type="molecule type" value="mRNA"/>
</dbReference>
<dbReference type="SMR" id="A4GE49"/>
<dbReference type="Allergome" id="490">
    <property type="allergen name" value="Ole e 2"/>
</dbReference>
<dbReference type="GO" id="GO:0005938">
    <property type="term" value="C:cell cortex"/>
    <property type="evidence" value="ECO:0007669"/>
    <property type="project" value="TreeGrafter"/>
</dbReference>
<dbReference type="GO" id="GO:0005856">
    <property type="term" value="C:cytoskeleton"/>
    <property type="evidence" value="ECO:0007669"/>
    <property type="project" value="UniProtKB-SubCell"/>
</dbReference>
<dbReference type="GO" id="GO:0003785">
    <property type="term" value="F:actin monomer binding"/>
    <property type="evidence" value="ECO:0007669"/>
    <property type="project" value="TreeGrafter"/>
</dbReference>
<dbReference type="CDD" id="cd00148">
    <property type="entry name" value="PROF"/>
    <property type="match status" value="1"/>
</dbReference>
<dbReference type="FunFam" id="3.30.450.30:FF:000001">
    <property type="entry name" value="Profilin"/>
    <property type="match status" value="1"/>
</dbReference>
<dbReference type="Gene3D" id="3.30.450.30">
    <property type="entry name" value="Dynein light chain 2a, cytoplasmic"/>
    <property type="match status" value="1"/>
</dbReference>
<dbReference type="InterPro" id="IPR048278">
    <property type="entry name" value="PFN"/>
</dbReference>
<dbReference type="InterPro" id="IPR005455">
    <property type="entry name" value="PFN_euk"/>
</dbReference>
<dbReference type="InterPro" id="IPR036140">
    <property type="entry name" value="PFN_sf"/>
</dbReference>
<dbReference type="InterPro" id="IPR027310">
    <property type="entry name" value="Profilin_CS"/>
</dbReference>
<dbReference type="PANTHER" id="PTHR11604">
    <property type="entry name" value="PROFILIN"/>
    <property type="match status" value="1"/>
</dbReference>
<dbReference type="PANTHER" id="PTHR11604:SF25">
    <property type="entry name" value="PROFILIN-5"/>
    <property type="match status" value="1"/>
</dbReference>
<dbReference type="Pfam" id="PF00235">
    <property type="entry name" value="Profilin"/>
    <property type="match status" value="1"/>
</dbReference>
<dbReference type="PRINTS" id="PR00392">
    <property type="entry name" value="PROFILIN"/>
</dbReference>
<dbReference type="PRINTS" id="PR01640">
    <property type="entry name" value="PROFILINPLNT"/>
</dbReference>
<dbReference type="SMART" id="SM00392">
    <property type="entry name" value="PROF"/>
    <property type="match status" value="1"/>
</dbReference>
<dbReference type="SUPFAM" id="SSF55770">
    <property type="entry name" value="Profilin (actin-binding protein)"/>
    <property type="match status" value="1"/>
</dbReference>
<dbReference type="PROSITE" id="PS00414">
    <property type="entry name" value="PROFILIN"/>
    <property type="match status" value="1"/>
</dbReference>
<organism>
    <name type="scientific">Olea europaea</name>
    <name type="common">Common olive</name>
    <dbReference type="NCBI Taxonomy" id="4146"/>
    <lineage>
        <taxon>Eukaryota</taxon>
        <taxon>Viridiplantae</taxon>
        <taxon>Streptophyta</taxon>
        <taxon>Embryophyta</taxon>
        <taxon>Tracheophyta</taxon>
        <taxon>Spermatophyta</taxon>
        <taxon>Magnoliopsida</taxon>
        <taxon>eudicotyledons</taxon>
        <taxon>Gunneridae</taxon>
        <taxon>Pentapetalae</taxon>
        <taxon>asterids</taxon>
        <taxon>lamiids</taxon>
        <taxon>Lamiales</taxon>
        <taxon>Oleaceae</taxon>
        <taxon>Oleeae</taxon>
        <taxon>Olea</taxon>
    </lineage>
</organism>
<accession>A4GE49</accession>
<name>PROBV_OLEEU</name>
<keyword id="KW-0009">Actin-binding</keyword>
<keyword id="KW-0020">Allergen</keyword>
<keyword id="KW-0963">Cytoplasm</keyword>
<keyword id="KW-0206">Cytoskeleton</keyword>
<keyword id="KW-1015">Disulfide bond</keyword>
<keyword id="KW-0597">Phosphoprotein</keyword>
<feature type="initiator methionine" description="Removed" evidence="1">
    <location>
        <position position="1"/>
    </location>
</feature>
<feature type="chain" id="PRO_0000425039" description="Profilin-3">
    <location>
        <begin position="2"/>
        <end position="134"/>
    </location>
</feature>
<feature type="short sequence motif" description="Involved in PIP2 interaction">
    <location>
        <begin position="84"/>
        <end position="100"/>
    </location>
</feature>
<feature type="modified residue" description="Phosphothreonine" evidence="1">
    <location>
        <position position="114"/>
    </location>
</feature>
<feature type="disulfide bond" evidence="3">
    <location>
        <begin position="13"/>
        <end position="118"/>
    </location>
</feature>
<proteinExistence type="evidence at protein level"/>
<sequence length="134" mass="14348">MSWQAYVDDHLMCDIEGHEGHRLTAAAIVGQDGSVWAQSATFPQFKPEEMNGIMTDFNEPGHLAPTGLHLGGTKYMVIQGEAGAVIRGKKGSGGITSKKTGQALVCGIYEEPVTPGQCNMVVERLGDYLLEQGL</sequence>